<sequence length="243" mass="25135">MSIIVFPAIDLKGGQVVRLAEGDMDRATVYGDDPADQARRFAEAGAEWLHVVDLDGAFAGRAVNAEAVEAIIKAFPGKVELGGGIRDRAGIDRWLALGVERVIIGTAALQNPDLVREAAKELPGRIVVGVDARDGFVATHGWAEVSTVGITDLADRFADAGVASLLFTDVGRDGLLKGCNVEATVALARHASIPVIASGGVASIADIAALVPHAGDGIEGVITGRALYDGRLDLAEALRVARG</sequence>
<protein>
    <recommendedName>
        <fullName evidence="1">1-(5-phosphoribosyl)-5-[(5-phosphoribosylamino)methylideneamino] imidazole-4-carboxamide isomerase</fullName>
        <ecNumber evidence="1">5.3.1.16</ecNumber>
    </recommendedName>
    <alternativeName>
        <fullName evidence="1">Phosphoribosylformimino-5-aminoimidazole carboxamide ribotide isomerase</fullName>
    </alternativeName>
</protein>
<name>HIS4_RHIWR</name>
<gene>
    <name evidence="1" type="primary">hisA</name>
    <name type="ordered locus">Swit_2719</name>
</gene>
<accession>A5V9V9</accession>
<dbReference type="EC" id="5.3.1.16" evidence="1"/>
<dbReference type="EMBL" id="CP000699">
    <property type="protein sequence ID" value="ABQ69075.1"/>
    <property type="molecule type" value="Genomic_DNA"/>
</dbReference>
<dbReference type="SMR" id="A5V9V9"/>
<dbReference type="STRING" id="392499.Swit_2719"/>
<dbReference type="PaxDb" id="392499-Swit_2719"/>
<dbReference type="KEGG" id="swi:Swit_2719"/>
<dbReference type="eggNOG" id="COG0106">
    <property type="taxonomic scope" value="Bacteria"/>
</dbReference>
<dbReference type="HOGENOM" id="CLU_048577_1_1_5"/>
<dbReference type="OrthoDB" id="9807749at2"/>
<dbReference type="UniPathway" id="UPA00031">
    <property type="reaction ID" value="UER00009"/>
</dbReference>
<dbReference type="Proteomes" id="UP000001989">
    <property type="component" value="Chromosome"/>
</dbReference>
<dbReference type="GO" id="GO:0005737">
    <property type="term" value="C:cytoplasm"/>
    <property type="evidence" value="ECO:0007669"/>
    <property type="project" value="UniProtKB-SubCell"/>
</dbReference>
<dbReference type="GO" id="GO:0003949">
    <property type="term" value="F:1-(5-phosphoribosyl)-5-[(5-phosphoribosylamino)methylideneamino]imidazole-4-carboxamide isomerase activity"/>
    <property type="evidence" value="ECO:0007669"/>
    <property type="project" value="UniProtKB-UniRule"/>
</dbReference>
<dbReference type="GO" id="GO:0000105">
    <property type="term" value="P:L-histidine biosynthetic process"/>
    <property type="evidence" value="ECO:0007669"/>
    <property type="project" value="UniProtKB-UniRule"/>
</dbReference>
<dbReference type="GO" id="GO:0000162">
    <property type="term" value="P:L-tryptophan biosynthetic process"/>
    <property type="evidence" value="ECO:0007669"/>
    <property type="project" value="TreeGrafter"/>
</dbReference>
<dbReference type="CDD" id="cd04732">
    <property type="entry name" value="HisA"/>
    <property type="match status" value="1"/>
</dbReference>
<dbReference type="FunFam" id="3.20.20.70:FF:000009">
    <property type="entry name" value="1-(5-phosphoribosyl)-5-[(5-phosphoribosylamino)methylideneamino] imidazole-4-carboxamide isomerase"/>
    <property type="match status" value="1"/>
</dbReference>
<dbReference type="Gene3D" id="3.20.20.70">
    <property type="entry name" value="Aldolase class I"/>
    <property type="match status" value="1"/>
</dbReference>
<dbReference type="HAMAP" id="MF_01014">
    <property type="entry name" value="HisA"/>
    <property type="match status" value="1"/>
</dbReference>
<dbReference type="InterPro" id="IPR013785">
    <property type="entry name" value="Aldolase_TIM"/>
</dbReference>
<dbReference type="InterPro" id="IPR006062">
    <property type="entry name" value="His_biosynth"/>
</dbReference>
<dbReference type="InterPro" id="IPR006063">
    <property type="entry name" value="HisA_bact_arch"/>
</dbReference>
<dbReference type="InterPro" id="IPR044524">
    <property type="entry name" value="Isoase_HisA-like"/>
</dbReference>
<dbReference type="InterPro" id="IPR023016">
    <property type="entry name" value="Isoase_HisA-like_bact"/>
</dbReference>
<dbReference type="InterPro" id="IPR011060">
    <property type="entry name" value="RibuloseP-bd_barrel"/>
</dbReference>
<dbReference type="NCBIfam" id="TIGR00007">
    <property type="entry name" value="1-(5-phosphoribosyl)-5-[(5-phosphoribosylamino)methylideneamino]imidazole-4-carboxamide isomerase"/>
    <property type="match status" value="1"/>
</dbReference>
<dbReference type="NCBIfam" id="NF010112">
    <property type="entry name" value="PRK13585.1"/>
    <property type="match status" value="1"/>
</dbReference>
<dbReference type="PANTHER" id="PTHR43090">
    <property type="entry name" value="1-(5-PHOSPHORIBOSYL)-5-[(5-PHOSPHORIBOSYLAMINO)METHYLIDENEAMINO] IMIDAZOLE-4-CARBOXAMIDE ISOMERASE"/>
    <property type="match status" value="1"/>
</dbReference>
<dbReference type="PANTHER" id="PTHR43090:SF2">
    <property type="entry name" value="1-(5-PHOSPHORIBOSYL)-5-[(5-PHOSPHORIBOSYLAMINO)METHYLIDENEAMINO] IMIDAZOLE-4-CARBOXAMIDE ISOMERASE"/>
    <property type="match status" value="1"/>
</dbReference>
<dbReference type="Pfam" id="PF00977">
    <property type="entry name" value="His_biosynth"/>
    <property type="match status" value="1"/>
</dbReference>
<dbReference type="SUPFAM" id="SSF51366">
    <property type="entry name" value="Ribulose-phoshate binding barrel"/>
    <property type="match status" value="1"/>
</dbReference>
<organism>
    <name type="scientific">Rhizorhabdus wittichii (strain DSM 6014 / CCUG 31198 / JCM 15750 / NBRC 105917 / EY 4224 / RW1)</name>
    <name type="common">Sphingomonas wittichii</name>
    <dbReference type="NCBI Taxonomy" id="392499"/>
    <lineage>
        <taxon>Bacteria</taxon>
        <taxon>Pseudomonadati</taxon>
        <taxon>Pseudomonadota</taxon>
        <taxon>Alphaproteobacteria</taxon>
        <taxon>Sphingomonadales</taxon>
        <taxon>Sphingomonadaceae</taxon>
        <taxon>Rhizorhabdus</taxon>
    </lineage>
</organism>
<evidence type="ECO:0000255" key="1">
    <source>
        <dbReference type="HAMAP-Rule" id="MF_01014"/>
    </source>
</evidence>
<feature type="chain" id="PRO_1000063235" description="1-(5-phosphoribosyl)-5-[(5-phosphoribosylamino)methylideneamino] imidazole-4-carboxamide isomerase">
    <location>
        <begin position="1"/>
        <end position="243"/>
    </location>
</feature>
<feature type="active site" description="Proton acceptor" evidence="1">
    <location>
        <position position="10"/>
    </location>
</feature>
<feature type="active site" description="Proton donor" evidence="1">
    <location>
        <position position="131"/>
    </location>
</feature>
<proteinExistence type="inferred from homology"/>
<reference key="1">
    <citation type="journal article" date="2010" name="J. Bacteriol.">
        <title>Genome sequence of the dioxin-mineralizing bacterium Sphingomonas wittichii RW1.</title>
        <authorList>
            <person name="Miller T.R."/>
            <person name="Delcher A.L."/>
            <person name="Salzberg S.L."/>
            <person name="Saunders E."/>
            <person name="Detter J.C."/>
            <person name="Halden R.U."/>
        </authorList>
    </citation>
    <scope>NUCLEOTIDE SEQUENCE [LARGE SCALE GENOMIC DNA]</scope>
    <source>
        <strain>DSM 6014 / CCUG 31198 / JCM 15750 / NBRC 105917 / EY 4224 / RW1</strain>
    </source>
</reference>
<comment type="catalytic activity">
    <reaction evidence="1">
        <text>1-(5-phospho-beta-D-ribosyl)-5-[(5-phospho-beta-D-ribosylamino)methylideneamino]imidazole-4-carboxamide = 5-[(5-phospho-1-deoxy-D-ribulos-1-ylimino)methylamino]-1-(5-phospho-beta-D-ribosyl)imidazole-4-carboxamide</text>
        <dbReference type="Rhea" id="RHEA:15469"/>
        <dbReference type="ChEBI" id="CHEBI:58435"/>
        <dbReference type="ChEBI" id="CHEBI:58525"/>
        <dbReference type="EC" id="5.3.1.16"/>
    </reaction>
</comment>
<comment type="pathway">
    <text evidence="1">Amino-acid biosynthesis; L-histidine biosynthesis; L-histidine from 5-phospho-alpha-D-ribose 1-diphosphate: step 4/9.</text>
</comment>
<comment type="subcellular location">
    <subcellularLocation>
        <location evidence="1">Cytoplasm</location>
    </subcellularLocation>
</comment>
<comment type="similarity">
    <text evidence="1">Belongs to the HisA/HisF family.</text>
</comment>
<keyword id="KW-0028">Amino-acid biosynthesis</keyword>
<keyword id="KW-0963">Cytoplasm</keyword>
<keyword id="KW-0368">Histidine biosynthesis</keyword>
<keyword id="KW-0413">Isomerase</keyword>
<keyword id="KW-1185">Reference proteome</keyword>